<reference key="1">
    <citation type="journal article" date="2004" name="Proc. Natl. Acad. Sci. U.S.A.">
        <title>Structural flexibility in the Burkholderia mallei genome.</title>
        <authorList>
            <person name="Nierman W.C."/>
            <person name="DeShazer D."/>
            <person name="Kim H.S."/>
            <person name="Tettelin H."/>
            <person name="Nelson K.E."/>
            <person name="Feldblyum T.V."/>
            <person name="Ulrich R.L."/>
            <person name="Ronning C.M."/>
            <person name="Brinkac L.M."/>
            <person name="Daugherty S.C."/>
            <person name="Davidsen T.D."/>
            <person name="DeBoy R.T."/>
            <person name="Dimitrov G."/>
            <person name="Dodson R.J."/>
            <person name="Durkin A.S."/>
            <person name="Gwinn M.L."/>
            <person name="Haft D.H."/>
            <person name="Khouri H.M."/>
            <person name="Kolonay J.F."/>
            <person name="Madupu R."/>
            <person name="Mohammoud Y."/>
            <person name="Nelson W.C."/>
            <person name="Radune D."/>
            <person name="Romero C.M."/>
            <person name="Sarria S."/>
            <person name="Selengut J."/>
            <person name="Shamblin C."/>
            <person name="Sullivan S.A."/>
            <person name="White O."/>
            <person name="Yu Y."/>
            <person name="Zafar N."/>
            <person name="Zhou L."/>
            <person name="Fraser C.M."/>
        </authorList>
    </citation>
    <scope>NUCLEOTIDE SEQUENCE [LARGE SCALE GENOMIC DNA]</scope>
    <source>
        <strain>ATCC 23344</strain>
    </source>
</reference>
<organism>
    <name type="scientific">Burkholderia mallei (strain ATCC 23344)</name>
    <dbReference type="NCBI Taxonomy" id="243160"/>
    <lineage>
        <taxon>Bacteria</taxon>
        <taxon>Pseudomonadati</taxon>
        <taxon>Pseudomonadota</taxon>
        <taxon>Betaproteobacteria</taxon>
        <taxon>Burkholderiales</taxon>
        <taxon>Burkholderiaceae</taxon>
        <taxon>Burkholderia</taxon>
        <taxon>pseudomallei group</taxon>
    </lineage>
</organism>
<feature type="chain" id="PRO_0000108465" description="Transcriptional regulator MraZ">
    <location>
        <begin position="1"/>
        <end position="142"/>
    </location>
</feature>
<feature type="domain" description="SpoVT-AbrB 1" evidence="2">
    <location>
        <begin position="5"/>
        <end position="51"/>
    </location>
</feature>
<feature type="domain" description="SpoVT-AbrB 2" evidence="2">
    <location>
        <begin position="77"/>
        <end position="120"/>
    </location>
</feature>
<comment type="subunit">
    <text evidence="1">Forms oligomers.</text>
</comment>
<comment type="subcellular location">
    <subcellularLocation>
        <location evidence="1">Cytoplasm</location>
        <location evidence="1">Nucleoid</location>
    </subcellularLocation>
</comment>
<comment type="similarity">
    <text evidence="1">Belongs to the MraZ family.</text>
</comment>
<sequence length="142" mass="15870">MFQGASALTLDAKGRMSVPSRYREALQGQAEGRVTVTKHPDGCLLLFPRPEWEVFRAKIAALPMDAHWWRRIFLGNAMDVDLDSAGRILVSPELRMAAGLEKEVMLLGMGSHFELWDAQTYTAKEQAAMAQGMPEALKNFTF</sequence>
<name>MRAZ_BURMA</name>
<dbReference type="EMBL" id="CP000010">
    <property type="protein sequence ID" value="AAU50032.1"/>
    <property type="molecule type" value="Genomic_DNA"/>
</dbReference>
<dbReference type="RefSeq" id="WP_004194130.1">
    <property type="nucleotide sequence ID" value="NC_006348.1"/>
</dbReference>
<dbReference type="RefSeq" id="YP_104103.1">
    <property type="nucleotide sequence ID" value="NC_006348.1"/>
</dbReference>
<dbReference type="SMR" id="Q62GR8"/>
<dbReference type="GeneID" id="93061636"/>
<dbReference type="KEGG" id="bma:BMA2560"/>
<dbReference type="PATRIC" id="fig|243160.12.peg.2637"/>
<dbReference type="eggNOG" id="COG2001">
    <property type="taxonomic scope" value="Bacteria"/>
</dbReference>
<dbReference type="HOGENOM" id="CLU_107907_2_1_4"/>
<dbReference type="Proteomes" id="UP000006693">
    <property type="component" value="Chromosome 1"/>
</dbReference>
<dbReference type="GO" id="GO:0005737">
    <property type="term" value="C:cytoplasm"/>
    <property type="evidence" value="ECO:0007669"/>
    <property type="project" value="UniProtKB-UniRule"/>
</dbReference>
<dbReference type="GO" id="GO:0009295">
    <property type="term" value="C:nucleoid"/>
    <property type="evidence" value="ECO:0007669"/>
    <property type="project" value="UniProtKB-SubCell"/>
</dbReference>
<dbReference type="GO" id="GO:0003700">
    <property type="term" value="F:DNA-binding transcription factor activity"/>
    <property type="evidence" value="ECO:0007669"/>
    <property type="project" value="UniProtKB-UniRule"/>
</dbReference>
<dbReference type="GO" id="GO:0000976">
    <property type="term" value="F:transcription cis-regulatory region binding"/>
    <property type="evidence" value="ECO:0007669"/>
    <property type="project" value="TreeGrafter"/>
</dbReference>
<dbReference type="GO" id="GO:2000143">
    <property type="term" value="P:negative regulation of DNA-templated transcription initiation"/>
    <property type="evidence" value="ECO:0007669"/>
    <property type="project" value="TreeGrafter"/>
</dbReference>
<dbReference type="CDD" id="cd16321">
    <property type="entry name" value="MraZ_C"/>
    <property type="match status" value="1"/>
</dbReference>
<dbReference type="CDD" id="cd16320">
    <property type="entry name" value="MraZ_N"/>
    <property type="match status" value="1"/>
</dbReference>
<dbReference type="Gene3D" id="3.40.1550.20">
    <property type="entry name" value="Transcriptional regulator MraZ domain"/>
    <property type="match status" value="1"/>
</dbReference>
<dbReference type="HAMAP" id="MF_01008">
    <property type="entry name" value="MraZ"/>
    <property type="match status" value="1"/>
</dbReference>
<dbReference type="InterPro" id="IPR003444">
    <property type="entry name" value="MraZ"/>
</dbReference>
<dbReference type="InterPro" id="IPR035644">
    <property type="entry name" value="MraZ_C"/>
</dbReference>
<dbReference type="InterPro" id="IPR020603">
    <property type="entry name" value="MraZ_dom"/>
</dbReference>
<dbReference type="InterPro" id="IPR035642">
    <property type="entry name" value="MraZ_N"/>
</dbReference>
<dbReference type="InterPro" id="IPR038619">
    <property type="entry name" value="MraZ_sf"/>
</dbReference>
<dbReference type="InterPro" id="IPR007159">
    <property type="entry name" value="SpoVT-AbrB_dom"/>
</dbReference>
<dbReference type="InterPro" id="IPR037914">
    <property type="entry name" value="SpoVT-AbrB_sf"/>
</dbReference>
<dbReference type="NCBIfam" id="TIGR00242">
    <property type="entry name" value="division/cell wall cluster transcriptional repressor MraZ"/>
    <property type="match status" value="1"/>
</dbReference>
<dbReference type="PANTHER" id="PTHR34701">
    <property type="entry name" value="TRANSCRIPTIONAL REGULATOR MRAZ"/>
    <property type="match status" value="1"/>
</dbReference>
<dbReference type="PANTHER" id="PTHR34701:SF1">
    <property type="entry name" value="TRANSCRIPTIONAL REGULATOR MRAZ"/>
    <property type="match status" value="1"/>
</dbReference>
<dbReference type="Pfam" id="PF02381">
    <property type="entry name" value="MraZ"/>
    <property type="match status" value="2"/>
</dbReference>
<dbReference type="SUPFAM" id="SSF89447">
    <property type="entry name" value="AbrB/MazE/MraZ-like"/>
    <property type="match status" value="1"/>
</dbReference>
<dbReference type="PROSITE" id="PS51740">
    <property type="entry name" value="SPOVT_ABRB"/>
    <property type="match status" value="2"/>
</dbReference>
<accession>Q62GR8</accession>
<gene>
    <name evidence="1" type="primary">mraZ</name>
    <name type="ordered locus">BMA2560</name>
</gene>
<evidence type="ECO:0000255" key="1">
    <source>
        <dbReference type="HAMAP-Rule" id="MF_01008"/>
    </source>
</evidence>
<evidence type="ECO:0000255" key="2">
    <source>
        <dbReference type="PROSITE-ProRule" id="PRU01076"/>
    </source>
</evidence>
<proteinExistence type="inferred from homology"/>
<protein>
    <recommendedName>
        <fullName>Transcriptional regulator MraZ</fullName>
    </recommendedName>
</protein>
<keyword id="KW-0963">Cytoplasm</keyword>
<keyword id="KW-0238">DNA-binding</keyword>
<keyword id="KW-1185">Reference proteome</keyword>
<keyword id="KW-0677">Repeat</keyword>
<keyword id="KW-0804">Transcription</keyword>
<keyword id="KW-0805">Transcription regulation</keyword>